<reference key="1">
    <citation type="journal article" date="1991" name="Gene">
        <title>The plasminogen activator family from the salivary gland of the vampire bat Desmodus rotundus: cloning and expression.</title>
        <authorList>
            <person name="Kraetzschmar J."/>
            <person name="Haendler B."/>
            <person name="Langer G."/>
            <person name="Boidol W."/>
            <person name="Bringmann P."/>
            <person name="Alagon A."/>
            <person name="Donner P."/>
            <person name="Schleuning W.-D."/>
        </authorList>
    </citation>
    <scope>NUCLEOTIDE SEQUENCE [MRNA]</scope>
    <source>
        <tissue>Salivary gland</tissue>
    </source>
</reference>
<reference key="2">
    <citation type="journal article" date="1992" name="Ann. N. Y. Acad. Sci.">
        <title>Plasminogen activators from the saliva of Desmodus rotundus (common vampire bat): unique fibrin specificity.</title>
        <authorList>
            <person name="Schleuning W.-D."/>
            <person name="Alagon A."/>
            <person name="Boidol W."/>
            <person name="Bringmann P."/>
            <person name="Petri T."/>
            <person name="Kraetzschmar J."/>
            <person name="Haendler B."/>
            <person name="Langer G."/>
            <person name="Baldus B."/>
            <person name="Witt W."/>
            <person name="Donner P."/>
        </authorList>
    </citation>
    <scope>CHARACTERIZATION</scope>
</reference>
<proteinExistence type="evidence at protein level"/>
<evidence type="ECO:0000250" key="1"/>
<evidence type="ECO:0000255" key="2"/>
<evidence type="ECO:0000255" key="3">
    <source>
        <dbReference type="PROSITE-ProRule" id="PRU00076"/>
    </source>
</evidence>
<evidence type="ECO:0000255" key="4">
    <source>
        <dbReference type="PROSITE-ProRule" id="PRU00121"/>
    </source>
</evidence>
<evidence type="ECO:0000255" key="5">
    <source>
        <dbReference type="PROSITE-ProRule" id="PRU00274"/>
    </source>
</evidence>
<protein>
    <recommendedName>
        <fullName>Salivary plasminogen activator beta</fullName>
        <ecNumber>3.4.21.68</ecNumber>
    </recommendedName>
    <alternativeName>
        <fullName>DSPA beta</fullName>
    </alternativeName>
</protein>
<name>URTB_DESRO</name>
<organism>
    <name type="scientific">Desmodus rotundus</name>
    <name type="common">Vampire bat</name>
    <dbReference type="NCBI Taxonomy" id="9430"/>
    <lineage>
        <taxon>Eukaryota</taxon>
        <taxon>Metazoa</taxon>
        <taxon>Chordata</taxon>
        <taxon>Craniata</taxon>
        <taxon>Vertebrata</taxon>
        <taxon>Euteleostomi</taxon>
        <taxon>Mammalia</taxon>
        <taxon>Eutheria</taxon>
        <taxon>Laurasiatheria</taxon>
        <taxon>Chiroptera</taxon>
        <taxon>Yangochiroptera</taxon>
        <taxon>Phyllostomidae</taxon>
        <taxon>Desmodontinae</taxon>
        <taxon>Desmodus</taxon>
    </lineage>
</organism>
<dbReference type="EC" id="3.4.21.68"/>
<dbReference type="EMBL" id="M63989">
    <property type="protein sequence ID" value="AAA31594.1"/>
    <property type="molecule type" value="mRNA"/>
</dbReference>
<dbReference type="PIR" id="JS0599">
    <property type="entry name" value="JS0599"/>
</dbReference>
<dbReference type="SMR" id="P98121"/>
<dbReference type="MEROPS" id="S01.232"/>
<dbReference type="GO" id="GO:0005615">
    <property type="term" value="C:extracellular space"/>
    <property type="evidence" value="ECO:0007669"/>
    <property type="project" value="TreeGrafter"/>
</dbReference>
<dbReference type="GO" id="GO:0004252">
    <property type="term" value="F:serine-type endopeptidase activity"/>
    <property type="evidence" value="ECO:0007669"/>
    <property type="project" value="UniProtKB-EC"/>
</dbReference>
<dbReference type="GO" id="GO:0031639">
    <property type="term" value="P:plasminogen activation"/>
    <property type="evidence" value="ECO:0007669"/>
    <property type="project" value="InterPro"/>
</dbReference>
<dbReference type="GO" id="GO:0048008">
    <property type="term" value="P:platelet-derived growth factor receptor signaling pathway"/>
    <property type="evidence" value="ECO:0007669"/>
    <property type="project" value="TreeGrafter"/>
</dbReference>
<dbReference type="GO" id="GO:0014909">
    <property type="term" value="P:smooth muscle cell migration"/>
    <property type="evidence" value="ECO:0007669"/>
    <property type="project" value="TreeGrafter"/>
</dbReference>
<dbReference type="CDD" id="cd00054">
    <property type="entry name" value="EGF_CA"/>
    <property type="match status" value="1"/>
</dbReference>
<dbReference type="CDD" id="cd00108">
    <property type="entry name" value="KR"/>
    <property type="match status" value="1"/>
</dbReference>
<dbReference type="CDD" id="cd00190">
    <property type="entry name" value="Tryp_SPc"/>
    <property type="match status" value="1"/>
</dbReference>
<dbReference type="FunFam" id="2.10.25.10:FF:000483">
    <property type="entry name" value="Tissue-type plasminogen activator"/>
    <property type="match status" value="1"/>
</dbReference>
<dbReference type="FunFam" id="2.40.10.10:FF:000003">
    <property type="entry name" value="Transmembrane serine protease 3"/>
    <property type="match status" value="1"/>
</dbReference>
<dbReference type="FunFam" id="2.40.20.10:FF:000001">
    <property type="entry name" value="Urokinase-type plasminogen activator"/>
    <property type="match status" value="1"/>
</dbReference>
<dbReference type="Gene3D" id="2.10.25.10">
    <property type="entry name" value="Laminin"/>
    <property type="match status" value="1"/>
</dbReference>
<dbReference type="Gene3D" id="2.40.20.10">
    <property type="entry name" value="Plasminogen Kringle 4"/>
    <property type="match status" value="1"/>
</dbReference>
<dbReference type="Gene3D" id="2.40.10.10">
    <property type="entry name" value="Trypsin-like serine proteases"/>
    <property type="match status" value="2"/>
</dbReference>
<dbReference type="InterPro" id="IPR000742">
    <property type="entry name" value="EGF-like_dom"/>
</dbReference>
<dbReference type="InterPro" id="IPR000001">
    <property type="entry name" value="Kringle"/>
</dbReference>
<dbReference type="InterPro" id="IPR013806">
    <property type="entry name" value="Kringle-like"/>
</dbReference>
<dbReference type="InterPro" id="IPR018056">
    <property type="entry name" value="Kringle_CS"/>
</dbReference>
<dbReference type="InterPro" id="IPR038178">
    <property type="entry name" value="Kringle_sf"/>
</dbReference>
<dbReference type="InterPro" id="IPR009003">
    <property type="entry name" value="Peptidase_S1_PA"/>
</dbReference>
<dbReference type="InterPro" id="IPR043504">
    <property type="entry name" value="Peptidase_S1_PA_chymotrypsin"/>
</dbReference>
<dbReference type="InterPro" id="IPR001314">
    <property type="entry name" value="Peptidase_S1A"/>
</dbReference>
<dbReference type="InterPro" id="IPR050127">
    <property type="entry name" value="Serine_Proteases_S1"/>
</dbReference>
<dbReference type="InterPro" id="IPR026280">
    <property type="entry name" value="Tissue_plasm_act"/>
</dbReference>
<dbReference type="InterPro" id="IPR001254">
    <property type="entry name" value="Trypsin_dom"/>
</dbReference>
<dbReference type="InterPro" id="IPR018114">
    <property type="entry name" value="TRYPSIN_HIS"/>
</dbReference>
<dbReference type="InterPro" id="IPR033116">
    <property type="entry name" value="TRYPSIN_SER"/>
</dbReference>
<dbReference type="PANTHER" id="PTHR24264:SF42">
    <property type="entry name" value="TISSUE-TYPE PLASMINOGEN ACTIVATOR"/>
    <property type="match status" value="1"/>
</dbReference>
<dbReference type="PANTHER" id="PTHR24264">
    <property type="entry name" value="TRYPSIN-RELATED"/>
    <property type="match status" value="1"/>
</dbReference>
<dbReference type="Pfam" id="PF00008">
    <property type="entry name" value="EGF"/>
    <property type="match status" value="1"/>
</dbReference>
<dbReference type="Pfam" id="PF00051">
    <property type="entry name" value="Kringle"/>
    <property type="match status" value="1"/>
</dbReference>
<dbReference type="Pfam" id="PF00089">
    <property type="entry name" value="Trypsin"/>
    <property type="match status" value="1"/>
</dbReference>
<dbReference type="PIRSF" id="PIRSF001145">
    <property type="entry name" value="Tissue_plasm_act"/>
    <property type="match status" value="1"/>
</dbReference>
<dbReference type="PRINTS" id="PR00722">
    <property type="entry name" value="CHYMOTRYPSIN"/>
</dbReference>
<dbReference type="PRINTS" id="PR00018">
    <property type="entry name" value="KRINGLE"/>
</dbReference>
<dbReference type="SMART" id="SM00181">
    <property type="entry name" value="EGF"/>
    <property type="match status" value="1"/>
</dbReference>
<dbReference type="SMART" id="SM00130">
    <property type="entry name" value="KR"/>
    <property type="match status" value="1"/>
</dbReference>
<dbReference type="SMART" id="SM00020">
    <property type="entry name" value="Tryp_SPc"/>
    <property type="match status" value="1"/>
</dbReference>
<dbReference type="SUPFAM" id="SSF57440">
    <property type="entry name" value="Kringle-like"/>
    <property type="match status" value="1"/>
</dbReference>
<dbReference type="SUPFAM" id="SSF50494">
    <property type="entry name" value="Trypsin-like serine proteases"/>
    <property type="match status" value="1"/>
</dbReference>
<dbReference type="PROSITE" id="PS00022">
    <property type="entry name" value="EGF_1"/>
    <property type="match status" value="1"/>
</dbReference>
<dbReference type="PROSITE" id="PS01186">
    <property type="entry name" value="EGF_2"/>
    <property type="match status" value="1"/>
</dbReference>
<dbReference type="PROSITE" id="PS50026">
    <property type="entry name" value="EGF_3"/>
    <property type="match status" value="1"/>
</dbReference>
<dbReference type="PROSITE" id="PS00021">
    <property type="entry name" value="KRINGLE_1"/>
    <property type="match status" value="1"/>
</dbReference>
<dbReference type="PROSITE" id="PS50070">
    <property type="entry name" value="KRINGLE_2"/>
    <property type="match status" value="1"/>
</dbReference>
<dbReference type="PROSITE" id="PS50240">
    <property type="entry name" value="TRYPSIN_DOM"/>
    <property type="match status" value="1"/>
</dbReference>
<dbReference type="PROSITE" id="PS00134">
    <property type="entry name" value="TRYPSIN_HIS"/>
    <property type="match status" value="1"/>
</dbReference>
<dbReference type="PROSITE" id="PS00135">
    <property type="entry name" value="TRYPSIN_SER"/>
    <property type="match status" value="1"/>
</dbReference>
<comment type="function">
    <text>Probably essential to support the feeding habits of this exclusively haematophagous animal. Probable potent thrombolytic agent.</text>
</comment>
<comment type="catalytic activity">
    <reaction>
        <text>Specific cleavage of Arg-|-Val bond in plasminogen to form plasmin.</text>
        <dbReference type="EC" id="3.4.21.68"/>
    </reaction>
</comment>
<comment type="subunit">
    <text>Monomer.</text>
</comment>
<comment type="subcellular location">
    <subcellularLocation>
        <location>Secreted</location>
    </subcellularLocation>
</comment>
<comment type="similarity">
    <text evidence="5">Belongs to the peptidase S1 family.</text>
</comment>
<accession>P98121</accession>
<feature type="signal peptide" evidence="2">
    <location>
        <begin position="1"/>
        <end position="36"/>
    </location>
</feature>
<feature type="chain" id="PRO_0000028342" description="Salivary plasminogen activator beta">
    <location>
        <begin position="37"/>
        <end position="431"/>
    </location>
</feature>
<feature type="domain" description="EGF-like" evidence="3">
    <location>
        <begin position="37"/>
        <end position="75"/>
    </location>
</feature>
<feature type="domain" description="Kringle" evidence="4">
    <location>
        <begin position="82"/>
        <end position="163"/>
    </location>
</feature>
<feature type="domain" description="Peptidase S1" evidence="5">
    <location>
        <begin position="180"/>
        <end position="430"/>
    </location>
</feature>
<feature type="active site" description="Charge relay system" evidence="1">
    <location>
        <position position="226"/>
    </location>
</feature>
<feature type="active site" description="Charge relay system" evidence="1">
    <location>
        <position position="275"/>
    </location>
</feature>
<feature type="active site" description="Charge relay system" evidence="1">
    <location>
        <position position="382"/>
    </location>
</feature>
<feature type="glycosylation site" description="N-linked (GlcNAc...) asparagine" evidence="2">
    <location>
        <position position="139"/>
    </location>
</feature>
<feature type="glycosylation site" description="N-linked (GlcNAc...) asparagine" evidence="2">
    <location>
        <position position="352"/>
    </location>
</feature>
<feature type="disulfide bond" evidence="1">
    <location>
        <begin position="41"/>
        <end position="52"/>
    </location>
</feature>
<feature type="disulfide bond" evidence="1">
    <location>
        <begin position="46"/>
        <end position="63"/>
    </location>
</feature>
<feature type="disulfide bond" evidence="1">
    <location>
        <begin position="65"/>
        <end position="74"/>
    </location>
</feature>
<feature type="disulfide bond" evidence="1">
    <location>
        <begin position="82"/>
        <end position="163"/>
    </location>
</feature>
<feature type="disulfide bond" evidence="1">
    <location>
        <begin position="103"/>
        <end position="145"/>
    </location>
</feature>
<feature type="disulfide bond" evidence="1">
    <location>
        <begin position="134"/>
        <end position="158"/>
    </location>
</feature>
<feature type="disulfide bond" evidence="1">
    <location>
        <begin position="168"/>
        <end position="299"/>
    </location>
</feature>
<feature type="disulfide bond" evidence="1">
    <location>
        <begin position="211"/>
        <end position="227"/>
    </location>
</feature>
<feature type="disulfide bond" evidence="1">
    <location>
        <begin position="219"/>
        <end position="288"/>
    </location>
</feature>
<feature type="disulfide bond" evidence="1">
    <location>
        <begin position="313"/>
        <end position="388"/>
    </location>
</feature>
<feature type="disulfide bond" evidence="1">
    <location>
        <begin position="345"/>
        <end position="361"/>
    </location>
</feature>
<feature type="disulfide bond" evidence="1">
    <location>
        <begin position="378"/>
        <end position="406"/>
    </location>
</feature>
<keyword id="KW-1015">Disulfide bond</keyword>
<keyword id="KW-0245">EGF-like domain</keyword>
<keyword id="KW-0325">Glycoprotein</keyword>
<keyword id="KW-0378">Hydrolase</keyword>
<keyword id="KW-0420">Kringle</keyword>
<keyword id="KW-0617">Plasminogen activation</keyword>
<keyword id="KW-0645">Protease</keyword>
<keyword id="KW-0964">Secreted</keyword>
<keyword id="KW-0720">Serine protease</keyword>
<keyword id="KW-0732">Signal</keyword>
<sequence length="431" mass="48222">MVNTMKTKLLCVLLLCGAVFSLPRQETYRQLARGSRAYGGCSELRCFNGGTCWQAASFSDFVCQCPKGYTGKQCEVDTHATCYKDQGVTYRGTWSTSESGAQCINWNSNLLTRRTYNGRRSDAITLGLGNHNYCRNPDNNSKPWCYVIKASKFILEFCSVPVCSKATCGLRKYKEPQLHSTGGLFTDITSHPWQAAIFAQNRRSSGERFLCGGILISSCWVLTAAHCFQERYPPQHLRVVLGRTYRVKPGKEEQTFEVEKCIIHEEFDDDTYNNDIALLQLKSGSPQCAQESDSVRAICLPEANLQLPDWTECELSGYGKHKSSSPFYSEQLKEGHVRLYPSSRCTSKFLFNKTVTNNMLCAGDTRSGEIYPNVHDACQGDSGGPLVCMNDNHMTLLGIISWGVGCGEKDIPGVYTKVTNYLGWIRDNMRP</sequence>